<reference key="1">
    <citation type="journal article" date="2008" name="Nat. Biotechnol.">
        <title>Genome sequencing and analysis of the filamentous fungus Penicillium chrysogenum.</title>
        <authorList>
            <person name="van den Berg M.A."/>
            <person name="Albang R."/>
            <person name="Albermann K."/>
            <person name="Badger J.H."/>
            <person name="Daran J.-M."/>
            <person name="Driessen A.J.M."/>
            <person name="Garcia-Estrada C."/>
            <person name="Fedorova N.D."/>
            <person name="Harris D.M."/>
            <person name="Heijne W.H.M."/>
            <person name="Joardar V.S."/>
            <person name="Kiel J.A.K.W."/>
            <person name="Kovalchuk A."/>
            <person name="Martin J.F."/>
            <person name="Nierman W.C."/>
            <person name="Nijland J.G."/>
            <person name="Pronk J.T."/>
            <person name="Roubos J.A."/>
            <person name="van der Klei I.J."/>
            <person name="van Peij N.N.M.E."/>
            <person name="Veenhuis M."/>
            <person name="von Doehren H."/>
            <person name="Wagner C."/>
            <person name="Wortman J.R."/>
            <person name="Bovenberg R.A.L."/>
        </authorList>
    </citation>
    <scope>NUCLEOTIDE SEQUENCE [LARGE SCALE GENOMIC DNA]</scope>
    <source>
        <strain>ATCC 28089 / DSM 1075 / NRRL 1951 / Wisconsin 54-1255</strain>
    </source>
</reference>
<reference key="2">
    <citation type="journal article" date="2013" name="Mol. Biotechnol.">
        <title>A comparative study of nitrilases identified by genome mining.</title>
        <authorList>
            <person name="Kaplan O."/>
            <person name="Vesela A.B."/>
            <person name="Petrickova A."/>
            <person name="Pasquarelli F."/>
            <person name="Picmanova M."/>
            <person name="Rinagelova A."/>
            <person name="Bhalla T.C."/>
            <person name="Patek M."/>
            <person name="Martinkova L."/>
        </authorList>
    </citation>
    <scope>FUNCTION</scope>
    <scope>CATALYTIC ACTIVITY</scope>
</reference>
<gene>
    <name type="ORF">PCH_Pc18g02620</name>
</gene>
<feature type="chain" id="PRO_0000432181" description="Cyanide hydratase">
    <location>
        <begin position="1"/>
        <end position="358"/>
    </location>
</feature>
<feature type="domain" description="CN hydrolase" evidence="2">
    <location>
        <begin position="8"/>
        <end position="287"/>
    </location>
</feature>
<feature type="active site" description="Proton acceptor" evidence="1">
    <location>
        <position position="48"/>
    </location>
</feature>
<feature type="active site" evidence="1">
    <location>
        <position position="130"/>
    </location>
</feature>
<feature type="active site" description="Nucleophile" evidence="1">
    <location>
        <position position="165"/>
    </location>
</feature>
<accession>B6HCY4</accession>
<proteinExistence type="evidence at protein level"/>
<organism>
    <name type="scientific">Penicillium rubens (strain ATCC 28089 / DSM 1075 / NRRL 1951 / Wisconsin 54-1255)</name>
    <name type="common">Penicillium chrysogenum</name>
    <dbReference type="NCBI Taxonomy" id="500485"/>
    <lineage>
        <taxon>Eukaryota</taxon>
        <taxon>Fungi</taxon>
        <taxon>Dikarya</taxon>
        <taxon>Ascomycota</taxon>
        <taxon>Pezizomycotina</taxon>
        <taxon>Eurotiomycetes</taxon>
        <taxon>Eurotiomycetidae</taxon>
        <taxon>Eurotiales</taxon>
        <taxon>Aspergillaceae</taxon>
        <taxon>Penicillium</taxon>
        <taxon>Penicillium chrysogenum species complex</taxon>
    </lineage>
</organism>
<dbReference type="EC" id="4.2.1.66" evidence="1 3"/>
<dbReference type="EMBL" id="AM920433">
    <property type="protein sequence ID" value="CAP94486.1"/>
    <property type="molecule type" value="Genomic_DNA"/>
</dbReference>
<dbReference type="RefSeq" id="XP_002562104.1">
    <property type="nucleotide sequence ID" value="XM_002562058.1"/>
</dbReference>
<dbReference type="SMR" id="B6HCY4"/>
<dbReference type="STRING" id="500485.B6HCY4"/>
<dbReference type="KEGG" id="pcs:N7525_000725"/>
<dbReference type="VEuPathDB" id="FungiDB:PCH_Pc18g02620"/>
<dbReference type="eggNOG" id="KOG0805">
    <property type="taxonomic scope" value="Eukaryota"/>
</dbReference>
<dbReference type="HOGENOM" id="CLU_030130_6_0_1"/>
<dbReference type="OMA" id="TSEPCWF"/>
<dbReference type="OrthoDB" id="10250282at2759"/>
<dbReference type="BioCyc" id="PCHR:PC18G02620-MONOMER"/>
<dbReference type="Proteomes" id="UP000000724">
    <property type="component" value="Contig Pc00c18"/>
</dbReference>
<dbReference type="GO" id="GO:0030196">
    <property type="term" value="F:cyanide hydratase activity"/>
    <property type="evidence" value="ECO:0007669"/>
    <property type="project" value="UniProtKB-UniRule"/>
</dbReference>
<dbReference type="GO" id="GO:0000257">
    <property type="term" value="F:nitrilase activity"/>
    <property type="evidence" value="ECO:0007669"/>
    <property type="project" value="UniProtKB-ARBA"/>
</dbReference>
<dbReference type="GO" id="GO:0019500">
    <property type="term" value="P:cyanide catabolic process"/>
    <property type="evidence" value="ECO:0007669"/>
    <property type="project" value="UniProtKB-UniRule"/>
</dbReference>
<dbReference type="CDD" id="cd07564">
    <property type="entry name" value="nitrilases_CHs"/>
    <property type="match status" value="1"/>
</dbReference>
<dbReference type="FunFam" id="3.60.110.10:FF:000011">
    <property type="entry name" value="Cyanide hydratase"/>
    <property type="match status" value="1"/>
</dbReference>
<dbReference type="Gene3D" id="3.60.110.10">
    <property type="entry name" value="Carbon-nitrogen hydrolase"/>
    <property type="match status" value="1"/>
</dbReference>
<dbReference type="HAMAP" id="MF_03224">
    <property type="entry name" value="CN_hydrolase"/>
    <property type="match status" value="1"/>
</dbReference>
<dbReference type="InterPro" id="IPR003010">
    <property type="entry name" value="C-N_Hydrolase"/>
</dbReference>
<dbReference type="InterPro" id="IPR036526">
    <property type="entry name" value="C-N_Hydrolase_sf"/>
</dbReference>
<dbReference type="InterPro" id="IPR037544">
    <property type="entry name" value="CN_hydrolase"/>
</dbReference>
<dbReference type="InterPro" id="IPR000132">
    <property type="entry name" value="Nitrilase/CN_hydratase_CS"/>
</dbReference>
<dbReference type="InterPro" id="IPR044149">
    <property type="entry name" value="Nitrilases_CHs"/>
</dbReference>
<dbReference type="PANTHER" id="PTHR46044:SF4">
    <property type="entry name" value="CYANIDE HYDRATASE"/>
    <property type="match status" value="1"/>
</dbReference>
<dbReference type="PANTHER" id="PTHR46044">
    <property type="entry name" value="NITRILASE"/>
    <property type="match status" value="1"/>
</dbReference>
<dbReference type="Pfam" id="PF00795">
    <property type="entry name" value="CN_hydrolase"/>
    <property type="match status" value="1"/>
</dbReference>
<dbReference type="SUPFAM" id="SSF56317">
    <property type="entry name" value="Carbon-nitrogen hydrolase"/>
    <property type="match status" value="1"/>
</dbReference>
<dbReference type="PROSITE" id="PS50263">
    <property type="entry name" value="CN_HYDROLASE"/>
    <property type="match status" value="1"/>
</dbReference>
<dbReference type="PROSITE" id="PS00920">
    <property type="entry name" value="NITRIL_CHT_1"/>
    <property type="match status" value="1"/>
</dbReference>
<evidence type="ECO:0000255" key="1">
    <source>
        <dbReference type="HAMAP-Rule" id="MF_03224"/>
    </source>
</evidence>
<evidence type="ECO:0000255" key="2">
    <source>
        <dbReference type="PROSITE-ProRule" id="PRU00054"/>
    </source>
</evidence>
<evidence type="ECO:0000269" key="3">
    <source>
    </source>
</evidence>
<evidence type="ECO:0000303" key="4">
    <source>
    </source>
</evidence>
<evidence type="ECO:0000305" key="5"/>
<comment type="function">
    <text evidence="1 3">Catalyzes the hydration of cyanide to formamide. Degradation of cyanide may be important for plant pathogenic fungi in infection of cyanogenic plants.</text>
</comment>
<comment type="catalytic activity">
    <reaction evidence="1 3">
        <text>formamide = hydrogen cyanide + H2O</text>
        <dbReference type="Rhea" id="RHEA:21720"/>
        <dbReference type="ChEBI" id="CHEBI:15377"/>
        <dbReference type="ChEBI" id="CHEBI:16397"/>
        <dbReference type="ChEBI" id="CHEBI:18407"/>
        <dbReference type="EC" id="4.2.1.66"/>
    </reaction>
</comment>
<comment type="subunit">
    <text evidence="1">Oligomer of dimers, forming left-handed helical fibers.</text>
</comment>
<comment type="induction">
    <text evidence="1">By cyanide.</text>
</comment>
<comment type="similarity">
    <text evidence="1 5">Belongs to the carbon-nitrogen hydrolase superfamily. Nitrilase family.</text>
</comment>
<protein>
    <recommendedName>
        <fullName evidence="1 4">Cyanide hydratase</fullName>
        <shortName evidence="1">CHT</shortName>
        <ecNumber evidence="1 3">4.2.1.66</ecNumber>
    </recommendedName>
    <alternativeName>
        <fullName evidence="1">Cyanide-degrading nitrilase</fullName>
    </alternativeName>
    <alternativeName>
        <fullName evidence="1">Formamide hydrolyase</fullName>
    </alternativeName>
    <alternativeName>
        <fullName evidence="4">NitPc1</fullName>
    </alternativeName>
</protein>
<keyword id="KW-0378">Hydrolase</keyword>
<keyword id="KW-0456">Lyase</keyword>
<keyword id="KW-1185">Reference proteome</keyword>
<sequence length="358" mass="39966">MVPVLKKYKAAAVNAEPGWFDLQESVRRTIHWIDEAGKAGCKLIAFPELWIPGYPYWAWKVNYQESLPLLKKYRENSLPSDSDEMRRIREAAKANKIWVSLGYSELDLASLYTTQIMISPAGDVINHRRKIKATHVERLVFGDGTGDTTESVMDTEIGRIGHLNCWENMNPFLKAYAASLGEQVHIAAWPLYPGKETLKYPDPYTNVAEANADLVTPAYAIETGSFTLAPWQTITAEGIKLNTPPGKELEDPNIYNGNGRIFGPDGQNLVPHPDKDFQGLLFVDIDLDEIHLTKSLADFGGHYMRPDLIRLLVDTNRKDLVVHEDRVNGGVAYTRTIDRVGLSAPLDASATEAQSESV</sequence>
<name>CHT_PENRW</name>